<feature type="chain" id="PRO_1000040532" description="6,7-dimethyl-8-ribityllumazine synthase">
    <location>
        <begin position="1"/>
        <end position="181"/>
    </location>
</feature>
<feature type="active site" description="Proton donor" evidence="1">
    <location>
        <position position="93"/>
    </location>
</feature>
<feature type="binding site" evidence="1">
    <location>
        <position position="23"/>
    </location>
    <ligand>
        <name>5-amino-6-(D-ribitylamino)uracil</name>
        <dbReference type="ChEBI" id="CHEBI:15934"/>
    </ligand>
</feature>
<feature type="binding site" evidence="1">
    <location>
        <begin position="61"/>
        <end position="63"/>
    </location>
    <ligand>
        <name>5-amino-6-(D-ribitylamino)uracil</name>
        <dbReference type="ChEBI" id="CHEBI:15934"/>
    </ligand>
</feature>
<feature type="binding site" evidence="1">
    <location>
        <begin position="85"/>
        <end position="87"/>
    </location>
    <ligand>
        <name>5-amino-6-(D-ribitylamino)uracil</name>
        <dbReference type="ChEBI" id="CHEBI:15934"/>
    </ligand>
</feature>
<feature type="binding site" evidence="1">
    <location>
        <begin position="90"/>
        <end position="91"/>
    </location>
    <ligand>
        <name>(2S)-2-hydroxy-3-oxobutyl phosphate</name>
        <dbReference type="ChEBI" id="CHEBI:58830"/>
    </ligand>
</feature>
<feature type="binding site" evidence="1">
    <location>
        <position position="118"/>
    </location>
    <ligand>
        <name>5-amino-6-(D-ribitylamino)uracil</name>
        <dbReference type="ChEBI" id="CHEBI:15934"/>
    </ligand>
</feature>
<feature type="binding site" evidence="1">
    <location>
        <position position="132"/>
    </location>
    <ligand>
        <name>(2S)-2-hydroxy-3-oxobutyl phosphate</name>
        <dbReference type="ChEBI" id="CHEBI:58830"/>
    </ligand>
</feature>
<proteinExistence type="inferred from homology"/>
<comment type="function">
    <text evidence="1">Catalyzes the formation of 6,7-dimethyl-8-ribityllumazine by condensation of 5-amino-6-(D-ribitylamino)uracil with 3,4-dihydroxy-2-butanone 4-phosphate. This is the penultimate step in the biosynthesis of riboflavin.</text>
</comment>
<comment type="catalytic activity">
    <reaction evidence="1">
        <text>(2S)-2-hydroxy-3-oxobutyl phosphate + 5-amino-6-(D-ribitylamino)uracil = 6,7-dimethyl-8-(1-D-ribityl)lumazine + phosphate + 2 H2O + H(+)</text>
        <dbReference type="Rhea" id="RHEA:26152"/>
        <dbReference type="ChEBI" id="CHEBI:15377"/>
        <dbReference type="ChEBI" id="CHEBI:15378"/>
        <dbReference type="ChEBI" id="CHEBI:15934"/>
        <dbReference type="ChEBI" id="CHEBI:43474"/>
        <dbReference type="ChEBI" id="CHEBI:58201"/>
        <dbReference type="ChEBI" id="CHEBI:58830"/>
        <dbReference type="EC" id="2.5.1.78"/>
    </reaction>
</comment>
<comment type="pathway">
    <text evidence="1">Cofactor biosynthesis; riboflavin biosynthesis; riboflavin from 2-hydroxy-3-oxobutyl phosphate and 5-amino-6-(D-ribitylamino)uracil: step 1/2.</text>
</comment>
<comment type="similarity">
    <text evidence="1">Belongs to the DMRL synthase family.</text>
</comment>
<name>RISB_SYNE7</name>
<protein>
    <recommendedName>
        <fullName evidence="1">6,7-dimethyl-8-ribityllumazine synthase</fullName>
        <shortName evidence="1">DMRL synthase</shortName>
        <shortName evidence="1">LS</shortName>
        <shortName evidence="1">Lumazine synthase</shortName>
        <ecNumber evidence="1">2.5.1.78</ecNumber>
    </recommendedName>
</protein>
<evidence type="ECO:0000255" key="1">
    <source>
        <dbReference type="HAMAP-Rule" id="MF_00178"/>
    </source>
</evidence>
<reference key="1">
    <citation type="submission" date="2005-08" db="EMBL/GenBank/DDBJ databases">
        <title>Complete sequence of chromosome 1 of Synechococcus elongatus PCC 7942.</title>
        <authorList>
            <consortium name="US DOE Joint Genome Institute"/>
            <person name="Copeland A."/>
            <person name="Lucas S."/>
            <person name="Lapidus A."/>
            <person name="Barry K."/>
            <person name="Detter J.C."/>
            <person name="Glavina T."/>
            <person name="Hammon N."/>
            <person name="Israni S."/>
            <person name="Pitluck S."/>
            <person name="Schmutz J."/>
            <person name="Larimer F."/>
            <person name="Land M."/>
            <person name="Kyrpides N."/>
            <person name="Lykidis A."/>
            <person name="Golden S."/>
            <person name="Richardson P."/>
        </authorList>
    </citation>
    <scope>NUCLEOTIDE SEQUENCE [LARGE SCALE GENOMIC DNA]</scope>
    <source>
        <strain>ATCC 33912 / PCC 7942 / FACHB-805</strain>
    </source>
</reference>
<keyword id="KW-1185">Reference proteome</keyword>
<keyword id="KW-0686">Riboflavin biosynthesis</keyword>
<keyword id="KW-0808">Transferase</keyword>
<sequence>MAVFEGSFVNASQFRLAVVIGRFNDLVCEKLLAGCQDCLKRHGVDPDPQGTQVDYAWVPGSFEIPLVARQLALTGRYDAIICLGAVIRGQTPHFDYVASEVAKGVAATSLQTGIPIAFGVLTVDNLQQALERAGIKSNLGWNYALSALEMASLMHQIRSTTGEVPRQTLPLAAAPSNFAGT</sequence>
<gene>
    <name evidence="1" type="primary">ribH</name>
    <name type="ordered locus">Synpcc7942_2244</name>
</gene>
<organism>
    <name type="scientific">Synechococcus elongatus (strain ATCC 33912 / PCC 7942 / FACHB-805)</name>
    <name type="common">Anacystis nidulans R2</name>
    <dbReference type="NCBI Taxonomy" id="1140"/>
    <lineage>
        <taxon>Bacteria</taxon>
        <taxon>Bacillati</taxon>
        <taxon>Cyanobacteriota</taxon>
        <taxon>Cyanophyceae</taxon>
        <taxon>Synechococcales</taxon>
        <taxon>Synechococcaceae</taxon>
        <taxon>Synechococcus</taxon>
    </lineage>
</organism>
<dbReference type="EC" id="2.5.1.78" evidence="1"/>
<dbReference type="EMBL" id="CP000100">
    <property type="protein sequence ID" value="ABB58274.1"/>
    <property type="molecule type" value="Genomic_DNA"/>
</dbReference>
<dbReference type="RefSeq" id="WP_011244164.1">
    <property type="nucleotide sequence ID" value="NZ_JACJTX010000001.1"/>
</dbReference>
<dbReference type="SMR" id="Q31KZ5"/>
<dbReference type="STRING" id="1140.Synpcc7942_2244"/>
<dbReference type="PaxDb" id="1140-Synpcc7942_2244"/>
<dbReference type="GeneID" id="72431126"/>
<dbReference type="KEGG" id="syf:Synpcc7942_2244"/>
<dbReference type="eggNOG" id="COG0054">
    <property type="taxonomic scope" value="Bacteria"/>
</dbReference>
<dbReference type="HOGENOM" id="CLU_089358_1_0_3"/>
<dbReference type="OrthoDB" id="9809709at2"/>
<dbReference type="BioCyc" id="SYNEL:SYNPCC7942_2244-MONOMER"/>
<dbReference type="UniPathway" id="UPA00275">
    <property type="reaction ID" value="UER00404"/>
</dbReference>
<dbReference type="Proteomes" id="UP000889800">
    <property type="component" value="Chromosome"/>
</dbReference>
<dbReference type="GO" id="GO:0005829">
    <property type="term" value="C:cytosol"/>
    <property type="evidence" value="ECO:0007669"/>
    <property type="project" value="TreeGrafter"/>
</dbReference>
<dbReference type="GO" id="GO:0009349">
    <property type="term" value="C:riboflavin synthase complex"/>
    <property type="evidence" value="ECO:0007669"/>
    <property type="project" value="InterPro"/>
</dbReference>
<dbReference type="GO" id="GO:0000906">
    <property type="term" value="F:6,7-dimethyl-8-ribityllumazine synthase activity"/>
    <property type="evidence" value="ECO:0007669"/>
    <property type="project" value="UniProtKB-UniRule"/>
</dbReference>
<dbReference type="GO" id="GO:0009231">
    <property type="term" value="P:riboflavin biosynthetic process"/>
    <property type="evidence" value="ECO:0007669"/>
    <property type="project" value="UniProtKB-UniRule"/>
</dbReference>
<dbReference type="CDD" id="cd09209">
    <property type="entry name" value="Lumazine_synthase-I"/>
    <property type="match status" value="1"/>
</dbReference>
<dbReference type="FunFam" id="3.40.50.960:FF:000001">
    <property type="entry name" value="6,7-dimethyl-8-ribityllumazine synthase"/>
    <property type="match status" value="1"/>
</dbReference>
<dbReference type="Gene3D" id="3.40.50.960">
    <property type="entry name" value="Lumazine/riboflavin synthase"/>
    <property type="match status" value="1"/>
</dbReference>
<dbReference type="HAMAP" id="MF_00178">
    <property type="entry name" value="Lumazine_synth"/>
    <property type="match status" value="1"/>
</dbReference>
<dbReference type="InterPro" id="IPR034964">
    <property type="entry name" value="LS"/>
</dbReference>
<dbReference type="InterPro" id="IPR002180">
    <property type="entry name" value="LS/RS"/>
</dbReference>
<dbReference type="InterPro" id="IPR036467">
    <property type="entry name" value="LS/RS_sf"/>
</dbReference>
<dbReference type="NCBIfam" id="TIGR00114">
    <property type="entry name" value="lumazine-synth"/>
    <property type="match status" value="1"/>
</dbReference>
<dbReference type="PANTHER" id="PTHR21058:SF0">
    <property type="entry name" value="6,7-DIMETHYL-8-RIBITYLLUMAZINE SYNTHASE"/>
    <property type="match status" value="1"/>
</dbReference>
<dbReference type="PANTHER" id="PTHR21058">
    <property type="entry name" value="6,7-DIMETHYL-8-RIBITYLLUMAZINE SYNTHASE DMRL SYNTHASE LUMAZINE SYNTHASE"/>
    <property type="match status" value="1"/>
</dbReference>
<dbReference type="Pfam" id="PF00885">
    <property type="entry name" value="DMRL_synthase"/>
    <property type="match status" value="1"/>
</dbReference>
<dbReference type="SUPFAM" id="SSF52121">
    <property type="entry name" value="Lumazine synthase"/>
    <property type="match status" value="1"/>
</dbReference>
<accession>Q31KZ5</accession>